<feature type="chain" id="PRO_0000433308" description="Obg-like ATPase 1">
    <location>
        <begin position="1"/>
        <end position="394"/>
    </location>
</feature>
<feature type="domain" description="OBG-type G" evidence="3">
    <location>
        <begin position="25"/>
        <end position="282"/>
    </location>
</feature>
<feature type="domain" description="TGS" evidence="4">
    <location>
        <begin position="303"/>
        <end position="386"/>
    </location>
</feature>
<feature type="binding site" evidence="2">
    <location>
        <begin position="34"/>
        <end position="39"/>
    </location>
    <ligand>
        <name>ATP</name>
        <dbReference type="ChEBI" id="CHEBI:30616"/>
    </ligand>
</feature>
<feature type="binding site" evidence="3">
    <location>
        <position position="38"/>
    </location>
    <ligand>
        <name>Mg(2+)</name>
        <dbReference type="ChEBI" id="CHEBI:18420"/>
    </ligand>
</feature>
<feature type="binding site" evidence="3">
    <location>
        <begin position="56"/>
        <end position="60"/>
    </location>
    <ligand>
        <name>ATP</name>
        <dbReference type="ChEBI" id="CHEBI:30616"/>
    </ligand>
</feature>
<feature type="binding site" evidence="3">
    <location>
        <position position="58"/>
    </location>
    <ligand>
        <name>Mg(2+)</name>
        <dbReference type="ChEBI" id="CHEBI:18420"/>
    </ligand>
</feature>
<feature type="binding site" evidence="3">
    <location>
        <begin position="94"/>
        <end position="97"/>
    </location>
    <ligand>
        <name>ATP</name>
        <dbReference type="ChEBI" id="CHEBI:30616"/>
    </ligand>
</feature>
<feature type="binding site" evidence="1">
    <location>
        <position position="129"/>
    </location>
    <ligand>
        <name>GTP</name>
        <dbReference type="ChEBI" id="CHEBI:37565"/>
    </ligand>
</feature>
<feature type="binding site" evidence="1">
    <location>
        <begin position="230"/>
        <end position="231"/>
    </location>
    <ligand>
        <name>ATP</name>
        <dbReference type="ChEBI" id="CHEBI:30616"/>
    </ligand>
</feature>
<feature type="binding site" evidence="2">
    <location>
        <position position="231"/>
    </location>
    <ligand>
        <name>ATP</name>
        <dbReference type="ChEBI" id="CHEBI:30616"/>
    </ligand>
</feature>
<feature type="binding site" evidence="3">
    <location>
        <begin position="263"/>
        <end position="265"/>
    </location>
    <ligand>
        <name>ATP</name>
        <dbReference type="ChEBI" id="CHEBI:30616"/>
    </ligand>
</feature>
<feature type="binding site" evidence="3">
    <location>
        <begin position="263"/>
        <end position="265"/>
    </location>
    <ligand>
        <name>GTP</name>
        <dbReference type="ChEBI" id="CHEBI:37565"/>
    </ligand>
</feature>
<proteinExistence type="inferred from homology"/>
<name>OLA1_ORYSI</name>
<organism evidence="6">
    <name type="scientific">Oryza sativa subsp. indica</name>
    <name type="common">Rice</name>
    <dbReference type="NCBI Taxonomy" id="39946"/>
    <lineage>
        <taxon>Eukaryota</taxon>
        <taxon>Viridiplantae</taxon>
        <taxon>Streptophyta</taxon>
        <taxon>Embryophyta</taxon>
        <taxon>Tracheophyta</taxon>
        <taxon>Spermatophyta</taxon>
        <taxon>Magnoliopsida</taxon>
        <taxon>Liliopsida</taxon>
        <taxon>Poales</taxon>
        <taxon>Poaceae</taxon>
        <taxon>BOP clade</taxon>
        <taxon>Oryzoideae</taxon>
        <taxon>Oryzeae</taxon>
        <taxon>Oryzinae</taxon>
        <taxon>Oryza</taxon>
        <taxon>Oryza sativa</taxon>
    </lineage>
</organism>
<accession>B8BBN7</accession>
<keyword id="KW-0067">ATP-binding</keyword>
<keyword id="KW-1003">Cell membrane</keyword>
<keyword id="KW-0963">Cytoplasm</keyword>
<keyword id="KW-0342">GTP-binding</keyword>
<keyword id="KW-0378">Hydrolase</keyword>
<keyword id="KW-0460">Magnesium</keyword>
<keyword id="KW-0472">Membrane</keyword>
<keyword id="KW-0479">Metal-binding</keyword>
<keyword id="KW-0547">Nucleotide-binding</keyword>
<keyword id="KW-1185">Reference proteome</keyword>
<dbReference type="EMBL" id="CM000133">
    <property type="protein sequence ID" value="EEC83063.1"/>
    <property type="molecule type" value="Genomic_DNA"/>
</dbReference>
<dbReference type="SMR" id="B8BBN7"/>
<dbReference type="STRING" id="39946.B8BBN7"/>
<dbReference type="EnsemblPlants" id="BGIOSGA028156-TA">
    <property type="protein sequence ID" value="BGIOSGA028156-PA"/>
    <property type="gene ID" value="BGIOSGA028156"/>
</dbReference>
<dbReference type="Gramene" id="BGIOSGA028156-TA">
    <property type="protein sequence ID" value="BGIOSGA028156-PA"/>
    <property type="gene ID" value="BGIOSGA028156"/>
</dbReference>
<dbReference type="HOGENOM" id="CLU_018395_1_0_1"/>
<dbReference type="OMA" id="DFHDLCE"/>
<dbReference type="Proteomes" id="UP000007015">
    <property type="component" value="Chromosome 8"/>
</dbReference>
<dbReference type="GO" id="GO:0005829">
    <property type="term" value="C:cytosol"/>
    <property type="evidence" value="ECO:0000250"/>
    <property type="project" value="UniProtKB"/>
</dbReference>
<dbReference type="GO" id="GO:0005886">
    <property type="term" value="C:plasma membrane"/>
    <property type="evidence" value="ECO:0007669"/>
    <property type="project" value="UniProtKB-SubCell"/>
</dbReference>
<dbReference type="GO" id="GO:0005524">
    <property type="term" value="F:ATP binding"/>
    <property type="evidence" value="ECO:0007669"/>
    <property type="project" value="UniProtKB-UniRule"/>
</dbReference>
<dbReference type="GO" id="GO:0016887">
    <property type="term" value="F:ATP hydrolysis activity"/>
    <property type="evidence" value="ECO:0007669"/>
    <property type="project" value="UniProtKB-UniRule"/>
</dbReference>
<dbReference type="GO" id="GO:0005525">
    <property type="term" value="F:GTP binding"/>
    <property type="evidence" value="ECO:0007669"/>
    <property type="project" value="UniProtKB-KW"/>
</dbReference>
<dbReference type="GO" id="GO:0003924">
    <property type="term" value="F:GTPase activity"/>
    <property type="evidence" value="ECO:0007669"/>
    <property type="project" value="EnsemblPlants"/>
</dbReference>
<dbReference type="GO" id="GO:0046872">
    <property type="term" value="F:metal ion binding"/>
    <property type="evidence" value="ECO:0007669"/>
    <property type="project" value="UniProtKB-KW"/>
</dbReference>
<dbReference type="GO" id="GO:0043023">
    <property type="term" value="F:ribosomal large subunit binding"/>
    <property type="evidence" value="ECO:0007669"/>
    <property type="project" value="UniProtKB-UniRule"/>
</dbReference>
<dbReference type="GO" id="GO:1900425">
    <property type="term" value="P:negative regulation of defense response to bacterium"/>
    <property type="evidence" value="ECO:0007669"/>
    <property type="project" value="EnsemblPlants"/>
</dbReference>
<dbReference type="GO" id="GO:1901001">
    <property type="term" value="P:negative regulation of response to salt stress"/>
    <property type="evidence" value="ECO:0000250"/>
    <property type="project" value="UniProtKB"/>
</dbReference>
<dbReference type="GO" id="GO:0009651">
    <property type="term" value="P:response to salt stress"/>
    <property type="evidence" value="ECO:0000250"/>
    <property type="project" value="UniProtKB"/>
</dbReference>
<dbReference type="CDD" id="cd04867">
    <property type="entry name" value="TGS_YchF_OLA1"/>
    <property type="match status" value="1"/>
</dbReference>
<dbReference type="CDD" id="cd01900">
    <property type="entry name" value="YchF"/>
    <property type="match status" value="1"/>
</dbReference>
<dbReference type="FunFam" id="1.10.150.300:FF:000003">
    <property type="entry name" value="Obg-like ATPase 1"/>
    <property type="match status" value="1"/>
</dbReference>
<dbReference type="FunFam" id="3.10.20.30:FF:000001">
    <property type="entry name" value="Ribosome-binding ATPase YchF"/>
    <property type="match status" value="1"/>
</dbReference>
<dbReference type="Gene3D" id="3.10.20.30">
    <property type="match status" value="1"/>
</dbReference>
<dbReference type="Gene3D" id="3.40.50.300">
    <property type="entry name" value="P-loop containing nucleotide triphosphate hydrolases"/>
    <property type="match status" value="1"/>
</dbReference>
<dbReference type="Gene3D" id="1.10.150.300">
    <property type="entry name" value="TGS-like domain"/>
    <property type="match status" value="1"/>
</dbReference>
<dbReference type="HAMAP" id="MF_00944">
    <property type="entry name" value="YchF_OLA1_ATPase"/>
    <property type="match status" value="1"/>
</dbReference>
<dbReference type="InterPro" id="IPR004396">
    <property type="entry name" value="ATPase_YchF/OLA1"/>
</dbReference>
<dbReference type="InterPro" id="IPR012675">
    <property type="entry name" value="Beta-grasp_dom_sf"/>
</dbReference>
<dbReference type="InterPro" id="IPR031167">
    <property type="entry name" value="G_OBG"/>
</dbReference>
<dbReference type="InterPro" id="IPR006073">
    <property type="entry name" value="GTP-bd"/>
</dbReference>
<dbReference type="InterPro" id="IPR027417">
    <property type="entry name" value="P-loop_NTPase"/>
</dbReference>
<dbReference type="InterPro" id="IPR004095">
    <property type="entry name" value="TGS"/>
</dbReference>
<dbReference type="InterPro" id="IPR012676">
    <property type="entry name" value="TGS-like"/>
</dbReference>
<dbReference type="InterPro" id="IPR023192">
    <property type="entry name" value="TGS-like_dom_sf"/>
</dbReference>
<dbReference type="InterPro" id="IPR013029">
    <property type="entry name" value="YchF_C"/>
</dbReference>
<dbReference type="InterPro" id="IPR041706">
    <property type="entry name" value="YchF_N"/>
</dbReference>
<dbReference type="NCBIfam" id="TIGR00092">
    <property type="entry name" value="redox-regulated ATPase YchF"/>
    <property type="match status" value="1"/>
</dbReference>
<dbReference type="PANTHER" id="PTHR23305">
    <property type="entry name" value="OBG GTPASE FAMILY"/>
    <property type="match status" value="1"/>
</dbReference>
<dbReference type="PANTHER" id="PTHR23305:SF11">
    <property type="entry name" value="OBG-LIKE ATPASE 1"/>
    <property type="match status" value="1"/>
</dbReference>
<dbReference type="Pfam" id="PF01926">
    <property type="entry name" value="MMR_HSR1"/>
    <property type="match status" value="1"/>
</dbReference>
<dbReference type="Pfam" id="PF06071">
    <property type="entry name" value="YchF-GTPase_C"/>
    <property type="match status" value="1"/>
</dbReference>
<dbReference type="PIRSF" id="PIRSF006641">
    <property type="entry name" value="CHP00092"/>
    <property type="match status" value="1"/>
</dbReference>
<dbReference type="PRINTS" id="PR00326">
    <property type="entry name" value="GTP1OBG"/>
</dbReference>
<dbReference type="SUPFAM" id="SSF52540">
    <property type="entry name" value="P-loop containing nucleoside triphosphate hydrolases"/>
    <property type="match status" value="1"/>
</dbReference>
<dbReference type="SUPFAM" id="SSF81271">
    <property type="entry name" value="TGS-like"/>
    <property type="match status" value="1"/>
</dbReference>
<dbReference type="PROSITE" id="PS51710">
    <property type="entry name" value="G_OBG"/>
    <property type="match status" value="1"/>
</dbReference>
<dbReference type="PROSITE" id="PS51880">
    <property type="entry name" value="TGS"/>
    <property type="match status" value="1"/>
</dbReference>
<reference key="1">
    <citation type="journal article" date="2005" name="PLoS Biol.">
        <title>The genomes of Oryza sativa: a history of duplications.</title>
        <authorList>
            <person name="Yu J."/>
            <person name="Wang J."/>
            <person name="Lin W."/>
            <person name="Li S."/>
            <person name="Li H."/>
            <person name="Zhou J."/>
            <person name="Ni P."/>
            <person name="Dong W."/>
            <person name="Hu S."/>
            <person name="Zeng C."/>
            <person name="Zhang J."/>
            <person name="Zhang Y."/>
            <person name="Li R."/>
            <person name="Xu Z."/>
            <person name="Li S."/>
            <person name="Li X."/>
            <person name="Zheng H."/>
            <person name="Cong L."/>
            <person name="Lin L."/>
            <person name="Yin J."/>
            <person name="Geng J."/>
            <person name="Li G."/>
            <person name="Shi J."/>
            <person name="Liu J."/>
            <person name="Lv H."/>
            <person name="Li J."/>
            <person name="Wang J."/>
            <person name="Deng Y."/>
            <person name="Ran L."/>
            <person name="Shi X."/>
            <person name="Wang X."/>
            <person name="Wu Q."/>
            <person name="Li C."/>
            <person name="Ren X."/>
            <person name="Wang J."/>
            <person name="Wang X."/>
            <person name="Li D."/>
            <person name="Liu D."/>
            <person name="Zhang X."/>
            <person name="Ji Z."/>
            <person name="Zhao W."/>
            <person name="Sun Y."/>
            <person name="Zhang Z."/>
            <person name="Bao J."/>
            <person name="Han Y."/>
            <person name="Dong L."/>
            <person name="Ji J."/>
            <person name="Chen P."/>
            <person name="Wu S."/>
            <person name="Liu J."/>
            <person name="Xiao Y."/>
            <person name="Bu D."/>
            <person name="Tan J."/>
            <person name="Yang L."/>
            <person name="Ye C."/>
            <person name="Zhang J."/>
            <person name="Xu J."/>
            <person name="Zhou Y."/>
            <person name="Yu Y."/>
            <person name="Zhang B."/>
            <person name="Zhuang S."/>
            <person name="Wei H."/>
            <person name="Liu B."/>
            <person name="Lei M."/>
            <person name="Yu H."/>
            <person name="Li Y."/>
            <person name="Xu H."/>
            <person name="Wei S."/>
            <person name="He X."/>
            <person name="Fang L."/>
            <person name="Zhang Z."/>
            <person name="Zhang Y."/>
            <person name="Huang X."/>
            <person name="Su Z."/>
            <person name="Tong W."/>
            <person name="Li J."/>
            <person name="Tong Z."/>
            <person name="Li S."/>
            <person name="Ye J."/>
            <person name="Wang L."/>
            <person name="Fang L."/>
            <person name="Lei T."/>
            <person name="Chen C.-S."/>
            <person name="Chen H.-C."/>
            <person name="Xu Z."/>
            <person name="Li H."/>
            <person name="Huang H."/>
            <person name="Zhang F."/>
            <person name="Xu H."/>
            <person name="Li N."/>
            <person name="Zhao C."/>
            <person name="Li S."/>
            <person name="Dong L."/>
            <person name="Huang Y."/>
            <person name="Li L."/>
            <person name="Xi Y."/>
            <person name="Qi Q."/>
            <person name="Li W."/>
            <person name="Zhang B."/>
            <person name="Hu W."/>
            <person name="Zhang Y."/>
            <person name="Tian X."/>
            <person name="Jiao Y."/>
            <person name="Liang X."/>
            <person name="Jin J."/>
            <person name="Gao L."/>
            <person name="Zheng W."/>
            <person name="Hao B."/>
            <person name="Liu S.-M."/>
            <person name="Wang W."/>
            <person name="Yuan L."/>
            <person name="Cao M."/>
            <person name="McDermott J."/>
            <person name="Samudrala R."/>
            <person name="Wang J."/>
            <person name="Wong G.K.-S."/>
            <person name="Yang H."/>
        </authorList>
    </citation>
    <scope>NUCLEOTIDE SEQUENCE [LARGE SCALE GENOMIC DNA]</scope>
    <source>
        <strain>cv. 93-11</strain>
    </source>
</reference>
<evidence type="ECO:0000250" key="1">
    <source>
        <dbReference type="UniProtKB" id="Q6Z1J6"/>
    </source>
</evidence>
<evidence type="ECO:0000255" key="2">
    <source>
        <dbReference type="HAMAP-Rule" id="MF_03167"/>
    </source>
</evidence>
<evidence type="ECO:0000255" key="3">
    <source>
        <dbReference type="PROSITE-ProRule" id="PRU01047"/>
    </source>
</evidence>
<evidence type="ECO:0000255" key="4">
    <source>
        <dbReference type="PROSITE-ProRule" id="PRU01228"/>
    </source>
</evidence>
<evidence type="ECO:0000312" key="5">
    <source>
        <dbReference type="EMBL" id="EEC83063.1"/>
    </source>
</evidence>
<evidence type="ECO:0000312" key="6">
    <source>
        <dbReference type="Proteomes" id="UP000007015"/>
    </source>
</evidence>
<protein>
    <recommendedName>
        <fullName evidence="2">Obg-like ATPase 1</fullName>
    </recommendedName>
    <alternativeName>
        <fullName>Ribosome-binding ATPase YchF</fullName>
        <shortName>OsYchF1</shortName>
    </alternativeName>
</protein>
<comment type="function">
    <text evidence="1 2">Hydrolyzes ATP, and can also hydrolyze GTP with lower efficiency. Has lower affinity for GTP (Potential). Exhibits GTPase activity (By similarity). Exhibits similar binding affinities and hydrolytic activities toward both GTP and ATP (By similarity). Binds to the 26 S ribosomal RNA in vitro, but not to the 5.8 S or 18 S rRNA (By similarity). Confers sensitivity to salinity stress by suppressing the anti-oxidation enzymatic activities and increasing lipid peroxidation thus leading to the accumulation of reactive oxygen species (ROS) (By similarity).</text>
</comment>
<comment type="cofactor">
    <cofactor evidence="3">
        <name>Mg(2+)</name>
        <dbReference type="ChEBI" id="CHEBI:18420"/>
    </cofactor>
</comment>
<comment type="activity regulation">
    <text evidence="1">Activated by GAP1.</text>
</comment>
<comment type="subunit">
    <text evidence="1 2">Monomer (Potential). Interacts with GAP1 (By similarity).</text>
</comment>
<comment type="subcellular location">
    <subcellularLocation>
        <location evidence="2">Cytoplasm</location>
    </subcellularLocation>
    <subcellularLocation>
        <location evidence="1">Cell membrane</location>
    </subcellularLocation>
    <subcellularLocation>
        <location evidence="1">Cytoplasm</location>
        <location evidence="1">Cytosol</location>
    </subcellularLocation>
    <text evidence="1">Localized mainly in the cytosol under NaCl treatment, but translocates to the plasma membrane upon wounding.</text>
</comment>
<comment type="similarity">
    <text evidence="2">Belongs to the TRAFAC class OBG-HflX-like GTPase superfamily. OBG GTPase family. YchF/OLA1 subfamily.</text>
</comment>
<sequence>MPPKASKKDAAPAERPILGRFSSHLKIGIVGLPNVGKSTFFNIVTKLSIPAENFPFCTIDPNEARVYVPDERFDWLCQLYKPKSEVSAYLEINDIAGLVRGAHAGEGLGNAFLSHIRAVDGIFHVLRAFEDKEVTHIDDSVDPVRDLETIGEELRLKDIEFVQNKIDDLEKSMKRSNDKQLKLEHELCEKVKAHLEDGKDVRFGDWKSADIEILNTFQLLTAKPVVYLVNMSEKDYQRKKNKFLPKIHAWVQEHGGETIIPFSCAFERLLADMPPDEAAKYCAENQIASVIPKIIKTGFAAIHLIYFFTAGPDEVKCWQIRRQTKAPQAAGTIHTDFERGFICAEVMKFDDLKELGSESAVKAAGKYRQEGKTYVVQDADIIFFKFNVSGGGKK</sequence>
<gene>
    <name evidence="5" type="ORF">OsI_28170</name>
</gene>